<evidence type="ECO:0000255" key="1">
    <source>
        <dbReference type="HAMAP-Rule" id="MF_01343"/>
    </source>
</evidence>
<evidence type="ECO:0000305" key="2"/>
<reference key="1">
    <citation type="journal article" date="2005" name="Genome Res.">
        <title>The Chlamydophila abortus genome sequence reveals an array of variable proteins that contribute to interspecies variation.</title>
        <authorList>
            <person name="Thomson N.R."/>
            <person name="Yeats C."/>
            <person name="Bell K."/>
            <person name="Holden M.T.G."/>
            <person name="Bentley S.D."/>
            <person name="Livingstone M."/>
            <person name="Cerdeno-Tarraga A.-M."/>
            <person name="Harris B."/>
            <person name="Doggett J."/>
            <person name="Ormond D."/>
            <person name="Mungall K."/>
            <person name="Clarke K."/>
            <person name="Feltwell T."/>
            <person name="Hance Z."/>
            <person name="Sanders M."/>
            <person name="Quail M.A."/>
            <person name="Price C."/>
            <person name="Barrell B.G."/>
            <person name="Parkhill J."/>
            <person name="Longbottom D."/>
        </authorList>
    </citation>
    <scope>NUCLEOTIDE SEQUENCE [LARGE SCALE GENOMIC DNA]</scope>
    <source>
        <strain>DSM 27085 / S26/3</strain>
    </source>
</reference>
<organism>
    <name type="scientific">Chlamydia abortus (strain DSM 27085 / S26/3)</name>
    <name type="common">Chlamydophila abortus</name>
    <dbReference type="NCBI Taxonomy" id="218497"/>
    <lineage>
        <taxon>Bacteria</taxon>
        <taxon>Pseudomonadati</taxon>
        <taxon>Chlamydiota</taxon>
        <taxon>Chlamydiia</taxon>
        <taxon>Chlamydiales</taxon>
        <taxon>Chlamydiaceae</taxon>
        <taxon>Chlamydia/Chlamydophila group</taxon>
        <taxon>Chlamydia</taxon>
    </lineage>
</organism>
<protein>
    <recommendedName>
        <fullName evidence="1">Small ribosomal subunit protein uS15</fullName>
    </recommendedName>
    <alternativeName>
        <fullName evidence="2">30S ribosomal protein S15</fullName>
    </alternativeName>
</protein>
<gene>
    <name evidence="1" type="primary">rpsO</name>
    <name type="ordered locus">CAB729</name>
</gene>
<feature type="chain" id="PRO_0000115414" description="Small ribosomal subunit protein uS15">
    <location>
        <begin position="1"/>
        <end position="89"/>
    </location>
</feature>
<accession>Q5L5B5</accession>
<proteinExistence type="inferred from homology"/>
<dbReference type="EMBL" id="CR848038">
    <property type="protein sequence ID" value="CAH64176.1"/>
    <property type="molecule type" value="Genomic_DNA"/>
</dbReference>
<dbReference type="RefSeq" id="WP_006343425.1">
    <property type="nucleotide sequence ID" value="NC_004552.2"/>
</dbReference>
<dbReference type="SMR" id="Q5L5B5"/>
<dbReference type="GeneID" id="93024283"/>
<dbReference type="KEGG" id="cab:CAB729"/>
<dbReference type="eggNOG" id="COG0184">
    <property type="taxonomic scope" value="Bacteria"/>
</dbReference>
<dbReference type="HOGENOM" id="CLU_148518_0_0_0"/>
<dbReference type="OrthoDB" id="9799262at2"/>
<dbReference type="Proteomes" id="UP000001012">
    <property type="component" value="Chromosome"/>
</dbReference>
<dbReference type="GO" id="GO:0022627">
    <property type="term" value="C:cytosolic small ribosomal subunit"/>
    <property type="evidence" value="ECO:0007669"/>
    <property type="project" value="TreeGrafter"/>
</dbReference>
<dbReference type="GO" id="GO:0019843">
    <property type="term" value="F:rRNA binding"/>
    <property type="evidence" value="ECO:0007669"/>
    <property type="project" value="UniProtKB-UniRule"/>
</dbReference>
<dbReference type="GO" id="GO:0003735">
    <property type="term" value="F:structural constituent of ribosome"/>
    <property type="evidence" value="ECO:0007669"/>
    <property type="project" value="InterPro"/>
</dbReference>
<dbReference type="GO" id="GO:0006412">
    <property type="term" value="P:translation"/>
    <property type="evidence" value="ECO:0007669"/>
    <property type="project" value="UniProtKB-UniRule"/>
</dbReference>
<dbReference type="CDD" id="cd00353">
    <property type="entry name" value="Ribosomal_S15p_S13e"/>
    <property type="match status" value="1"/>
</dbReference>
<dbReference type="FunFam" id="1.10.287.10:FF:000002">
    <property type="entry name" value="30S ribosomal protein S15"/>
    <property type="match status" value="1"/>
</dbReference>
<dbReference type="Gene3D" id="6.10.250.3130">
    <property type="match status" value="1"/>
</dbReference>
<dbReference type="Gene3D" id="1.10.287.10">
    <property type="entry name" value="S15/NS1, RNA-binding"/>
    <property type="match status" value="1"/>
</dbReference>
<dbReference type="HAMAP" id="MF_01343_B">
    <property type="entry name" value="Ribosomal_uS15_B"/>
    <property type="match status" value="1"/>
</dbReference>
<dbReference type="InterPro" id="IPR000589">
    <property type="entry name" value="Ribosomal_uS15"/>
</dbReference>
<dbReference type="InterPro" id="IPR005290">
    <property type="entry name" value="Ribosomal_uS15_bac-type"/>
</dbReference>
<dbReference type="InterPro" id="IPR009068">
    <property type="entry name" value="uS15_NS1_RNA-bd_sf"/>
</dbReference>
<dbReference type="NCBIfam" id="TIGR00952">
    <property type="entry name" value="S15_bact"/>
    <property type="match status" value="1"/>
</dbReference>
<dbReference type="PANTHER" id="PTHR23321">
    <property type="entry name" value="RIBOSOMAL PROTEIN S15, BACTERIAL AND ORGANELLAR"/>
    <property type="match status" value="1"/>
</dbReference>
<dbReference type="PANTHER" id="PTHR23321:SF26">
    <property type="entry name" value="SMALL RIBOSOMAL SUBUNIT PROTEIN US15M"/>
    <property type="match status" value="1"/>
</dbReference>
<dbReference type="Pfam" id="PF00312">
    <property type="entry name" value="Ribosomal_S15"/>
    <property type="match status" value="1"/>
</dbReference>
<dbReference type="SMART" id="SM01387">
    <property type="entry name" value="Ribosomal_S15"/>
    <property type="match status" value="1"/>
</dbReference>
<dbReference type="SUPFAM" id="SSF47060">
    <property type="entry name" value="S15/NS1 RNA-binding domain"/>
    <property type="match status" value="1"/>
</dbReference>
<dbReference type="PROSITE" id="PS00362">
    <property type="entry name" value="RIBOSOMAL_S15"/>
    <property type="match status" value="1"/>
</dbReference>
<sequence length="89" mass="10416">MSLDKGTKEEITKKFQLHEKDTGSADVQIAILTEHITELKEHLKRSPKDQNSRLALLKLVGQRRKLLEYLNSTDTERYKNLISRLNLRK</sequence>
<name>RS15_CHLAB</name>
<keyword id="KW-0687">Ribonucleoprotein</keyword>
<keyword id="KW-0689">Ribosomal protein</keyword>
<keyword id="KW-0694">RNA-binding</keyword>
<keyword id="KW-0699">rRNA-binding</keyword>
<comment type="function">
    <text evidence="1">One of the primary rRNA binding proteins, it binds directly to 16S rRNA where it helps nucleate assembly of the platform of the 30S subunit by binding and bridging several RNA helices of the 16S rRNA.</text>
</comment>
<comment type="function">
    <text evidence="1">Forms an intersubunit bridge (bridge B4) with the 23S rRNA of the 50S subunit in the ribosome.</text>
</comment>
<comment type="subunit">
    <text evidence="1">Part of the 30S ribosomal subunit. Forms a bridge to the 50S subunit in the 70S ribosome, contacting the 23S rRNA.</text>
</comment>
<comment type="similarity">
    <text evidence="1">Belongs to the universal ribosomal protein uS15 family.</text>
</comment>